<reference key="1">
    <citation type="journal article" date="2000" name="Nature">
        <title>Complete genome sequence of Pseudomonas aeruginosa PAO1, an opportunistic pathogen.</title>
        <authorList>
            <person name="Stover C.K."/>
            <person name="Pham X.-Q.T."/>
            <person name="Erwin A.L."/>
            <person name="Mizoguchi S.D."/>
            <person name="Warrener P."/>
            <person name="Hickey M.J."/>
            <person name="Brinkman F.S.L."/>
            <person name="Hufnagle W.O."/>
            <person name="Kowalik D.J."/>
            <person name="Lagrou M."/>
            <person name="Garber R.L."/>
            <person name="Goltry L."/>
            <person name="Tolentino E."/>
            <person name="Westbrock-Wadman S."/>
            <person name="Yuan Y."/>
            <person name="Brody L.L."/>
            <person name="Coulter S.N."/>
            <person name="Folger K.R."/>
            <person name="Kas A."/>
            <person name="Larbig K."/>
            <person name="Lim R.M."/>
            <person name="Smith K.A."/>
            <person name="Spencer D.H."/>
            <person name="Wong G.K.-S."/>
            <person name="Wu Z."/>
            <person name="Paulsen I.T."/>
            <person name="Reizer J."/>
            <person name="Saier M.H. Jr."/>
            <person name="Hancock R.E.W."/>
            <person name="Lory S."/>
            <person name="Olson M.V."/>
        </authorList>
    </citation>
    <scope>NUCLEOTIDE SEQUENCE [LARGE SCALE GENOMIC DNA]</scope>
    <source>
        <strain>ATCC 15692 / DSM 22644 / CIP 104116 / JCM 14847 / LMG 12228 / 1C / PRS 101 / PAO1</strain>
    </source>
</reference>
<reference key="2">
    <citation type="journal article" date="2002" name="J. Bacteriol.">
        <title>Cluster II che genes from Pseudomonas aeruginosa are required for an optimal chemotactic response.</title>
        <authorList>
            <person name="Ferrandez A."/>
            <person name="Hawkins A.C."/>
            <person name="Summerfield D.T."/>
            <person name="Harwood C.S."/>
        </authorList>
    </citation>
    <scope>FUNCTION IN CHEMOTAXIS</scope>
    <scope>DISRUPTION PHENOTYPE</scope>
    <source>
        <strain>ATCC 15692 / DSM 22644 / CIP 104116 / JCM 14847 / LMG 12228 / 1C / PRS 101 / PAO1</strain>
    </source>
</reference>
<reference key="3">
    <citation type="journal article" date="2009" name="PLoS Pathog.">
        <title>Caenorhabditis elegans semi-automated liquid screen reveals a specialized role for the chemotaxis gene cheB2 in Pseudomonas aeruginosa virulence.</title>
        <authorList>
            <person name="Garvis S."/>
            <person name="Munder A."/>
            <person name="Ball G."/>
            <person name="de Bentzmann S."/>
            <person name="Wiehlmann L."/>
            <person name="Ewbank J.J."/>
            <person name="Tuemmler B."/>
            <person name="Filloux A."/>
        </authorList>
    </citation>
    <scope>FUNCTION IN VIRULENCE</scope>
    <scope>DISRUPTION PHENOTYPE</scope>
    <source>
        <strain>TBCF10839</strain>
    </source>
</reference>
<reference key="4">
    <citation type="journal article" date="2020" name="Int. J. Mol. Sci.">
        <title>Evidence for pentapeptide-dependent and independent CheB methylesterases.</title>
        <authorList>
            <person name="Velando F."/>
            <person name="Gavira J.A."/>
            <person name="Rico-Jimenez M."/>
            <person name="Matilla M.A."/>
            <person name="Krell T."/>
        </authorList>
    </citation>
    <scope>FUNCTION</scope>
    <scope>INTERACTION WITH MCPB</scope>
    <scope>MUTAGENESIS OF ASP-55</scope>
</reference>
<comment type="function">
    <text evidence="1 2 3 6">Involved in chemotaxis. Part of a chemotaxis signal transduction system that modulates chemotaxis in response to various stimuli. Catalyzes the demethylation of specific methylglutamate residues introduced into the chemoreceptors (methyl-accepting chemotaxis proteins or MCP) by CheR. Also mediates the irreversible deamidation of specific glutamine residues to glutamic acid (By similarity) (PubMed:12142407). Acts on the methyl-accepting chemotaxis protein McpB (Probable). May be involved in a specific chemotactic response, which takes place during infection and is required for P.aeruginosa pathogenicity (PubMed:19662168).</text>
</comment>
<comment type="catalytic activity">
    <reaction evidence="1">
        <text>[protein]-L-glutamate 5-O-methyl ester + H2O = L-glutamyl-[protein] + methanol + H(+)</text>
        <dbReference type="Rhea" id="RHEA:23236"/>
        <dbReference type="Rhea" id="RHEA-COMP:10208"/>
        <dbReference type="Rhea" id="RHEA-COMP:10311"/>
        <dbReference type="ChEBI" id="CHEBI:15377"/>
        <dbReference type="ChEBI" id="CHEBI:15378"/>
        <dbReference type="ChEBI" id="CHEBI:17790"/>
        <dbReference type="ChEBI" id="CHEBI:29973"/>
        <dbReference type="ChEBI" id="CHEBI:82795"/>
        <dbReference type="EC" id="3.1.1.61"/>
    </reaction>
</comment>
<comment type="catalytic activity">
    <reaction evidence="1">
        <text>L-glutaminyl-[protein] + H2O = L-glutamyl-[protein] + NH4(+)</text>
        <dbReference type="Rhea" id="RHEA:16441"/>
        <dbReference type="Rhea" id="RHEA-COMP:10207"/>
        <dbReference type="Rhea" id="RHEA-COMP:10208"/>
        <dbReference type="ChEBI" id="CHEBI:15377"/>
        <dbReference type="ChEBI" id="CHEBI:28938"/>
        <dbReference type="ChEBI" id="CHEBI:29973"/>
        <dbReference type="ChEBI" id="CHEBI:30011"/>
        <dbReference type="EC" id="3.5.1.44"/>
    </reaction>
</comment>
<comment type="subunit">
    <text evidence="4">Interacts with the C-terminal pentapeptide GWEEF of McpB.</text>
</comment>
<comment type="subcellular location">
    <subcellularLocation>
        <location evidence="1">Cytoplasm</location>
    </subcellularLocation>
</comment>
<comment type="domain">
    <text evidence="1">Contains a C-terminal catalytic domain, and an N-terminal region which modulates catalytic activity.</text>
</comment>
<comment type="PTM">
    <text evidence="1">Phosphorylated by CheA. Phosphorylation of the N-terminal regulatory domain activates the methylesterase activity.</text>
</comment>
<comment type="disruption phenotype">
    <text evidence="2 3">Mutant is defective in chemotaxis, but does not have an obvious defect in swimming behavior (PubMed:12142407). Mutant shows strongly reduced adherence to a biological surface such as the human epithelial cell line, and a reduction in swimming motility (PubMed:19662168). Also shows a highly attenuated virulence in C.elegans and in a murine lung infection model, and fails to induce strong inflammatory response in the infected mice lungs (PubMed:19662168).</text>
</comment>
<comment type="miscellaneous">
    <text evidence="2">This protein is able to restore chemotaxis to a completely non-chemotactic CheB1 mutant to near wild-type levels.</text>
</comment>
<comment type="similarity">
    <text evidence="1">Belongs to the CheB family.</text>
</comment>
<dbReference type="EC" id="3.1.1.61" evidence="1"/>
<dbReference type="EC" id="3.5.1.44" evidence="1"/>
<dbReference type="EMBL" id="AE004091">
    <property type="protein sequence ID" value="AAG03563.1"/>
    <property type="molecule type" value="Genomic_DNA"/>
</dbReference>
<dbReference type="PIR" id="F83623">
    <property type="entry name" value="F83623"/>
</dbReference>
<dbReference type="RefSeq" id="NP_248863.1">
    <property type="nucleotide sequence ID" value="NC_002516.2"/>
</dbReference>
<dbReference type="RefSeq" id="WP_003083922.1">
    <property type="nucleotide sequence ID" value="NZ_QZGE01000015.1"/>
</dbReference>
<dbReference type="SMR" id="Q9I6V9"/>
<dbReference type="FunCoup" id="Q9I6V9">
    <property type="interactions" value="436"/>
</dbReference>
<dbReference type="STRING" id="208964.PA0173"/>
<dbReference type="PaxDb" id="208964-PA0173"/>
<dbReference type="GeneID" id="882256"/>
<dbReference type="KEGG" id="pae:PA0173"/>
<dbReference type="PATRIC" id="fig|208964.12.peg.179"/>
<dbReference type="PseudoCAP" id="PA0173"/>
<dbReference type="HOGENOM" id="CLU_000445_51_0_6"/>
<dbReference type="InParanoid" id="Q9I6V9"/>
<dbReference type="OrthoDB" id="9793421at2"/>
<dbReference type="PhylomeDB" id="Q9I6V9"/>
<dbReference type="BioCyc" id="PAER208964:G1FZ6-174-MONOMER"/>
<dbReference type="Proteomes" id="UP000002438">
    <property type="component" value="Chromosome"/>
</dbReference>
<dbReference type="GO" id="GO:0005737">
    <property type="term" value="C:cytoplasm"/>
    <property type="evidence" value="ECO:0007669"/>
    <property type="project" value="UniProtKB-SubCell"/>
</dbReference>
<dbReference type="GO" id="GO:0000156">
    <property type="term" value="F:phosphorelay response regulator activity"/>
    <property type="evidence" value="ECO:0007669"/>
    <property type="project" value="InterPro"/>
</dbReference>
<dbReference type="GO" id="GO:0008984">
    <property type="term" value="F:protein-glutamate methylesterase activity"/>
    <property type="evidence" value="ECO:0007669"/>
    <property type="project" value="UniProtKB-UniRule"/>
</dbReference>
<dbReference type="GO" id="GO:0050568">
    <property type="term" value="F:protein-glutamine glutaminase activity"/>
    <property type="evidence" value="ECO:0007669"/>
    <property type="project" value="UniProtKB-UniRule"/>
</dbReference>
<dbReference type="GO" id="GO:0006935">
    <property type="term" value="P:chemotaxis"/>
    <property type="evidence" value="ECO:0007669"/>
    <property type="project" value="UniProtKB-UniRule"/>
</dbReference>
<dbReference type="CDD" id="cd16432">
    <property type="entry name" value="CheB_Rec"/>
    <property type="match status" value="1"/>
</dbReference>
<dbReference type="CDD" id="cd17541">
    <property type="entry name" value="REC_CheB-like"/>
    <property type="match status" value="1"/>
</dbReference>
<dbReference type="FunFam" id="3.40.50.2300:FF:000060">
    <property type="entry name" value="Protein-glutamate methylesterase/protein-glutamine glutaminase"/>
    <property type="match status" value="1"/>
</dbReference>
<dbReference type="Gene3D" id="3.40.50.2300">
    <property type="match status" value="1"/>
</dbReference>
<dbReference type="Gene3D" id="3.40.50.180">
    <property type="entry name" value="Methylesterase CheB, C-terminal domain"/>
    <property type="match status" value="1"/>
</dbReference>
<dbReference type="HAMAP" id="MF_00099">
    <property type="entry name" value="CheB_chemtxs"/>
    <property type="match status" value="1"/>
</dbReference>
<dbReference type="InterPro" id="IPR008248">
    <property type="entry name" value="CheB-like"/>
</dbReference>
<dbReference type="InterPro" id="IPR035909">
    <property type="entry name" value="CheB_C"/>
</dbReference>
<dbReference type="InterPro" id="IPR011006">
    <property type="entry name" value="CheY-like_superfamily"/>
</dbReference>
<dbReference type="InterPro" id="IPR000673">
    <property type="entry name" value="Sig_transdc_resp-reg_Me-estase"/>
</dbReference>
<dbReference type="InterPro" id="IPR001789">
    <property type="entry name" value="Sig_transdc_resp-reg_receiver"/>
</dbReference>
<dbReference type="NCBIfam" id="NF001965">
    <property type="entry name" value="PRK00742.1"/>
    <property type="match status" value="1"/>
</dbReference>
<dbReference type="NCBIfam" id="NF009206">
    <property type="entry name" value="PRK12555.1"/>
    <property type="match status" value="1"/>
</dbReference>
<dbReference type="PANTHER" id="PTHR42872">
    <property type="entry name" value="PROTEIN-GLUTAMATE METHYLESTERASE/PROTEIN-GLUTAMINE GLUTAMINASE"/>
    <property type="match status" value="1"/>
</dbReference>
<dbReference type="PANTHER" id="PTHR42872:SF6">
    <property type="entry name" value="PROTEIN-GLUTAMATE METHYLESTERASE_PROTEIN-GLUTAMINE GLUTAMINASE"/>
    <property type="match status" value="1"/>
</dbReference>
<dbReference type="Pfam" id="PF01339">
    <property type="entry name" value="CheB_methylest"/>
    <property type="match status" value="1"/>
</dbReference>
<dbReference type="Pfam" id="PF00072">
    <property type="entry name" value="Response_reg"/>
    <property type="match status" value="1"/>
</dbReference>
<dbReference type="PIRSF" id="PIRSF000876">
    <property type="entry name" value="RR_chemtxs_CheB"/>
    <property type="match status" value="1"/>
</dbReference>
<dbReference type="SMART" id="SM00448">
    <property type="entry name" value="REC"/>
    <property type="match status" value="1"/>
</dbReference>
<dbReference type="SUPFAM" id="SSF52172">
    <property type="entry name" value="CheY-like"/>
    <property type="match status" value="1"/>
</dbReference>
<dbReference type="SUPFAM" id="SSF52738">
    <property type="entry name" value="Methylesterase CheB, C-terminal domain"/>
    <property type="match status" value="1"/>
</dbReference>
<dbReference type="PROSITE" id="PS50122">
    <property type="entry name" value="CHEB"/>
    <property type="match status" value="1"/>
</dbReference>
<dbReference type="PROSITE" id="PS50110">
    <property type="entry name" value="RESPONSE_REGULATORY"/>
    <property type="match status" value="1"/>
</dbReference>
<accession>Q9I6V9</accession>
<sequence>MPISVLVVDDSALIRSLLKEIIQADPELRLVGCAPDAFVARDLIKQHAPDVISLDVEMPRMDGLTFLDKLMKARPTPVLMISSLTERGSEATLRALELGAVDFIAKPRLGIAEGMQAYAEEIRAKLKTVARARLRRRAADAPAPPESAAPLLSTEKIIALGASTGGTEALKEVLLGLPAHSPGVVITQHMPPGFTRSFAERLDRLTRLSVSEARDGDRILPGHALVAPGDHHMEVQRSGANYVVRLNRQAQVNGHRPAVDVMFESLARCAGRNLLAGLLTGMGKDGARGLLAIRQAGGYTLAQDEATCVVYGMPREAVELGAAEDVLPLERIAAALLQQAARRGSGNRL</sequence>
<gene>
    <name evidence="1 5" type="primary">cheB2</name>
    <name type="ordered locus">PA0173</name>
</gene>
<keyword id="KW-0145">Chemotaxis</keyword>
<keyword id="KW-0963">Cytoplasm</keyword>
<keyword id="KW-0378">Hydrolase</keyword>
<keyword id="KW-0597">Phosphoprotein</keyword>
<keyword id="KW-1185">Reference proteome</keyword>
<organism>
    <name type="scientific">Pseudomonas aeruginosa (strain ATCC 15692 / DSM 22644 / CIP 104116 / JCM 14847 / LMG 12228 / 1C / PRS 101 / PAO1)</name>
    <dbReference type="NCBI Taxonomy" id="208964"/>
    <lineage>
        <taxon>Bacteria</taxon>
        <taxon>Pseudomonadati</taxon>
        <taxon>Pseudomonadota</taxon>
        <taxon>Gammaproteobacteria</taxon>
        <taxon>Pseudomonadales</taxon>
        <taxon>Pseudomonadaceae</taxon>
        <taxon>Pseudomonas</taxon>
    </lineage>
</organism>
<evidence type="ECO:0000255" key="1">
    <source>
        <dbReference type="HAMAP-Rule" id="MF_00099"/>
    </source>
</evidence>
<evidence type="ECO:0000269" key="2">
    <source>
    </source>
</evidence>
<evidence type="ECO:0000269" key="3">
    <source>
    </source>
</evidence>
<evidence type="ECO:0000269" key="4">
    <source>
    </source>
</evidence>
<evidence type="ECO:0000303" key="5">
    <source>
    </source>
</evidence>
<evidence type="ECO:0000305" key="6">
    <source>
    </source>
</evidence>
<feature type="chain" id="PRO_0000158009" description="Protein-glutamate methylesterase/protein-glutamine glutaminase 2">
    <location>
        <begin position="1"/>
        <end position="349"/>
    </location>
</feature>
<feature type="domain" description="Response regulatory" evidence="1">
    <location>
        <begin position="4"/>
        <end position="121"/>
    </location>
</feature>
<feature type="domain" description="CheB-type methylesterase" evidence="1">
    <location>
        <begin position="151"/>
        <end position="343"/>
    </location>
</feature>
<feature type="active site" evidence="1">
    <location>
        <position position="163"/>
    </location>
</feature>
<feature type="active site" evidence="1">
    <location>
        <position position="189"/>
    </location>
</feature>
<feature type="active site" evidence="1">
    <location>
        <position position="285"/>
    </location>
</feature>
<feature type="modified residue" description="4-aspartylphosphate" evidence="1">
    <location>
        <position position="55"/>
    </location>
</feature>
<feature type="mutagenesis site" description="Mimics phosphorylation. Shows a slight increase in affinity for McpB." evidence="4">
    <original>D</original>
    <variation>E</variation>
    <location>
        <position position="55"/>
    </location>
</feature>
<protein>
    <recommendedName>
        <fullName evidence="1">Protein-glutamate methylesterase/protein-glutamine glutaminase 2</fullName>
        <ecNumber evidence="1">3.1.1.61</ecNumber>
        <ecNumber evidence="1">3.5.1.44</ecNumber>
    </recommendedName>
</protein>
<name>CHEB2_PSEAE</name>
<proteinExistence type="evidence at protein level"/>